<reference key="1">
    <citation type="journal article" date="2010" name="Environ. Microbiol.">
        <title>The genome of Syntrophomonas wolfei: new insights into syntrophic metabolism and biohydrogen production.</title>
        <authorList>
            <person name="Sieber J.R."/>
            <person name="Sims D.R."/>
            <person name="Han C."/>
            <person name="Kim E."/>
            <person name="Lykidis A."/>
            <person name="Lapidus A.L."/>
            <person name="McDonnald E."/>
            <person name="Rohlin L."/>
            <person name="Culley D.E."/>
            <person name="Gunsalus R."/>
            <person name="McInerney M.J."/>
        </authorList>
    </citation>
    <scope>NUCLEOTIDE SEQUENCE [LARGE SCALE GENOMIC DNA]</scope>
    <source>
        <strain>DSM 2245B / Goettingen</strain>
    </source>
</reference>
<organism>
    <name type="scientific">Syntrophomonas wolfei subsp. wolfei (strain DSM 2245B / Goettingen)</name>
    <dbReference type="NCBI Taxonomy" id="335541"/>
    <lineage>
        <taxon>Bacteria</taxon>
        <taxon>Bacillati</taxon>
        <taxon>Bacillota</taxon>
        <taxon>Clostridia</taxon>
        <taxon>Eubacteriales</taxon>
        <taxon>Syntrophomonadaceae</taxon>
        <taxon>Syntrophomonas</taxon>
    </lineage>
</organism>
<protein>
    <recommendedName>
        <fullName evidence="1">3-phosphoshikimate 1-carboxyvinyltransferase</fullName>
        <ecNumber evidence="1">2.5.1.19</ecNumber>
    </recommendedName>
    <alternativeName>
        <fullName evidence="1">5-enolpyruvylshikimate-3-phosphate synthase</fullName>
        <shortName evidence="1">EPSP synthase</shortName>
        <shortName evidence="1">EPSPS</shortName>
    </alternativeName>
</protein>
<keyword id="KW-0028">Amino-acid biosynthesis</keyword>
<keyword id="KW-0057">Aromatic amino acid biosynthesis</keyword>
<keyword id="KW-0963">Cytoplasm</keyword>
<keyword id="KW-1185">Reference proteome</keyword>
<keyword id="KW-0808">Transferase</keyword>
<evidence type="ECO:0000255" key="1">
    <source>
        <dbReference type="HAMAP-Rule" id="MF_00210"/>
    </source>
</evidence>
<sequence>MRKINSALKPLKGDVSVDADKSISHRAVIFSALAPGKSIIKNFLQANDTLSSCSCLRQLGIKIAAMDSEMQVYGRGLSGFSEPHTVLDCGNSGTTMRLMAGLLSAQPFLSILNGDESLNQRPMKRIIEPLGIMGANIQARQNGNYPPLVIRGNRLSGLSYQLPVASAQVKSALMLAALNADSETLLSEPQKTRDHSERMLTAMGADIAVNGLEIRLKPGKELQATEFLVPGDISSAAFFMVAASIIPGSELLIRHVGVNPSRAGIIEILNEMGARIKLENERTISGEPVADLIVSHSRLQAIDIDGAVIPRLIDEIPILAVAMALAEGESTVRGAAELRVKETDRIAAISTELAKMGADIRERSDGFVIKGKPDSLKGGRVASKGDHRIAMSLAVAALAAKGESVIEDSEVVNISFPRFWDLLNTLTS</sequence>
<gene>
    <name evidence="1" type="primary">aroA</name>
    <name type="ordered locus">Swol_1347</name>
</gene>
<comment type="function">
    <text evidence="1">Catalyzes the transfer of the enolpyruvyl moiety of phosphoenolpyruvate (PEP) to the 5-hydroxyl of shikimate-3-phosphate (S3P) to produce enolpyruvyl shikimate-3-phosphate and inorganic phosphate.</text>
</comment>
<comment type="catalytic activity">
    <reaction evidence="1">
        <text>3-phosphoshikimate + phosphoenolpyruvate = 5-O-(1-carboxyvinyl)-3-phosphoshikimate + phosphate</text>
        <dbReference type="Rhea" id="RHEA:21256"/>
        <dbReference type="ChEBI" id="CHEBI:43474"/>
        <dbReference type="ChEBI" id="CHEBI:57701"/>
        <dbReference type="ChEBI" id="CHEBI:58702"/>
        <dbReference type="ChEBI" id="CHEBI:145989"/>
        <dbReference type="EC" id="2.5.1.19"/>
    </reaction>
    <physiologicalReaction direction="left-to-right" evidence="1">
        <dbReference type="Rhea" id="RHEA:21257"/>
    </physiologicalReaction>
</comment>
<comment type="pathway">
    <text evidence="1">Metabolic intermediate biosynthesis; chorismate biosynthesis; chorismate from D-erythrose 4-phosphate and phosphoenolpyruvate: step 6/7.</text>
</comment>
<comment type="subunit">
    <text evidence="1">Monomer.</text>
</comment>
<comment type="subcellular location">
    <subcellularLocation>
        <location evidence="1">Cytoplasm</location>
    </subcellularLocation>
</comment>
<comment type="similarity">
    <text evidence="1">Belongs to the EPSP synthase family.</text>
</comment>
<feature type="chain" id="PRO_0000325394" description="3-phosphoshikimate 1-carboxyvinyltransferase">
    <location>
        <begin position="1"/>
        <end position="428"/>
    </location>
</feature>
<feature type="active site" description="Proton acceptor" evidence="1">
    <location>
        <position position="314"/>
    </location>
</feature>
<feature type="binding site" evidence="1">
    <location>
        <position position="21"/>
    </location>
    <ligand>
        <name>3-phosphoshikimate</name>
        <dbReference type="ChEBI" id="CHEBI:145989"/>
    </ligand>
</feature>
<feature type="binding site" evidence="1">
    <location>
        <position position="21"/>
    </location>
    <ligand>
        <name>phosphoenolpyruvate</name>
        <dbReference type="ChEBI" id="CHEBI:58702"/>
    </ligand>
</feature>
<feature type="binding site" evidence="1">
    <location>
        <position position="22"/>
    </location>
    <ligand>
        <name>3-phosphoshikimate</name>
        <dbReference type="ChEBI" id="CHEBI:145989"/>
    </ligand>
</feature>
<feature type="binding site" evidence="1">
    <location>
        <position position="26"/>
    </location>
    <ligand>
        <name>3-phosphoshikimate</name>
        <dbReference type="ChEBI" id="CHEBI:145989"/>
    </ligand>
</feature>
<feature type="binding site" evidence="1">
    <location>
        <position position="93"/>
    </location>
    <ligand>
        <name>phosphoenolpyruvate</name>
        <dbReference type="ChEBI" id="CHEBI:58702"/>
    </ligand>
</feature>
<feature type="binding site" evidence="1">
    <location>
        <position position="121"/>
    </location>
    <ligand>
        <name>phosphoenolpyruvate</name>
        <dbReference type="ChEBI" id="CHEBI:58702"/>
    </ligand>
</feature>
<feature type="binding site" evidence="1">
    <location>
        <position position="166"/>
    </location>
    <ligand>
        <name>3-phosphoshikimate</name>
        <dbReference type="ChEBI" id="CHEBI:145989"/>
    </ligand>
</feature>
<feature type="binding site" evidence="1">
    <location>
        <position position="168"/>
    </location>
    <ligand>
        <name>3-phosphoshikimate</name>
        <dbReference type="ChEBI" id="CHEBI:145989"/>
    </ligand>
</feature>
<feature type="binding site" evidence="1">
    <location>
        <position position="168"/>
    </location>
    <ligand>
        <name>phosphoenolpyruvate</name>
        <dbReference type="ChEBI" id="CHEBI:58702"/>
    </ligand>
</feature>
<feature type="binding site" evidence="1">
    <location>
        <position position="314"/>
    </location>
    <ligand>
        <name>3-phosphoshikimate</name>
        <dbReference type="ChEBI" id="CHEBI:145989"/>
    </ligand>
</feature>
<feature type="binding site" evidence="1">
    <location>
        <position position="341"/>
    </location>
    <ligand>
        <name>3-phosphoshikimate</name>
        <dbReference type="ChEBI" id="CHEBI:145989"/>
    </ligand>
</feature>
<feature type="binding site" evidence="1">
    <location>
        <position position="345"/>
    </location>
    <ligand>
        <name>phosphoenolpyruvate</name>
        <dbReference type="ChEBI" id="CHEBI:58702"/>
    </ligand>
</feature>
<feature type="binding site" evidence="1">
    <location>
        <position position="388"/>
    </location>
    <ligand>
        <name>phosphoenolpyruvate</name>
        <dbReference type="ChEBI" id="CHEBI:58702"/>
    </ligand>
</feature>
<name>AROA_SYNWW</name>
<dbReference type="EC" id="2.5.1.19" evidence="1"/>
<dbReference type="EMBL" id="CP000448">
    <property type="protein sequence ID" value="ABI68655.1"/>
    <property type="molecule type" value="Genomic_DNA"/>
</dbReference>
<dbReference type="RefSeq" id="WP_011640754.1">
    <property type="nucleotide sequence ID" value="NC_008346.1"/>
</dbReference>
<dbReference type="SMR" id="Q0AX99"/>
<dbReference type="STRING" id="335541.Swol_1347"/>
<dbReference type="KEGG" id="swo:Swol_1347"/>
<dbReference type="eggNOG" id="COG0128">
    <property type="taxonomic scope" value="Bacteria"/>
</dbReference>
<dbReference type="HOGENOM" id="CLU_024321_0_1_9"/>
<dbReference type="OrthoDB" id="9809920at2"/>
<dbReference type="UniPathway" id="UPA00053">
    <property type="reaction ID" value="UER00089"/>
</dbReference>
<dbReference type="Proteomes" id="UP000001968">
    <property type="component" value="Chromosome"/>
</dbReference>
<dbReference type="GO" id="GO:0005737">
    <property type="term" value="C:cytoplasm"/>
    <property type="evidence" value="ECO:0007669"/>
    <property type="project" value="UniProtKB-SubCell"/>
</dbReference>
<dbReference type="GO" id="GO:0003866">
    <property type="term" value="F:3-phosphoshikimate 1-carboxyvinyltransferase activity"/>
    <property type="evidence" value="ECO:0007669"/>
    <property type="project" value="UniProtKB-UniRule"/>
</dbReference>
<dbReference type="GO" id="GO:0008652">
    <property type="term" value="P:amino acid biosynthetic process"/>
    <property type="evidence" value="ECO:0007669"/>
    <property type="project" value="UniProtKB-KW"/>
</dbReference>
<dbReference type="GO" id="GO:0009073">
    <property type="term" value="P:aromatic amino acid family biosynthetic process"/>
    <property type="evidence" value="ECO:0007669"/>
    <property type="project" value="UniProtKB-KW"/>
</dbReference>
<dbReference type="GO" id="GO:0009423">
    <property type="term" value="P:chorismate biosynthetic process"/>
    <property type="evidence" value="ECO:0007669"/>
    <property type="project" value="UniProtKB-UniRule"/>
</dbReference>
<dbReference type="CDD" id="cd01556">
    <property type="entry name" value="EPSP_synthase"/>
    <property type="match status" value="1"/>
</dbReference>
<dbReference type="FunFam" id="3.65.10.10:FF:000005">
    <property type="entry name" value="3-phosphoshikimate 1-carboxyvinyltransferase"/>
    <property type="match status" value="1"/>
</dbReference>
<dbReference type="FunFam" id="3.65.10.10:FF:000006">
    <property type="entry name" value="3-phosphoshikimate 1-carboxyvinyltransferase"/>
    <property type="match status" value="1"/>
</dbReference>
<dbReference type="Gene3D" id="3.65.10.10">
    <property type="entry name" value="Enolpyruvate transferase domain"/>
    <property type="match status" value="2"/>
</dbReference>
<dbReference type="HAMAP" id="MF_00210">
    <property type="entry name" value="EPSP_synth"/>
    <property type="match status" value="1"/>
</dbReference>
<dbReference type="InterPro" id="IPR001986">
    <property type="entry name" value="Enolpyruvate_Tfrase_dom"/>
</dbReference>
<dbReference type="InterPro" id="IPR036968">
    <property type="entry name" value="Enolpyruvate_Tfrase_sf"/>
</dbReference>
<dbReference type="InterPro" id="IPR006264">
    <property type="entry name" value="EPSP_synthase"/>
</dbReference>
<dbReference type="InterPro" id="IPR023193">
    <property type="entry name" value="EPSP_synthase_CS"/>
</dbReference>
<dbReference type="InterPro" id="IPR013792">
    <property type="entry name" value="RNA3'P_cycl/enolpyr_Trfase_a/b"/>
</dbReference>
<dbReference type="NCBIfam" id="TIGR01356">
    <property type="entry name" value="aroA"/>
    <property type="match status" value="1"/>
</dbReference>
<dbReference type="PANTHER" id="PTHR21090">
    <property type="entry name" value="AROM/DEHYDROQUINATE SYNTHASE"/>
    <property type="match status" value="1"/>
</dbReference>
<dbReference type="PANTHER" id="PTHR21090:SF5">
    <property type="entry name" value="PENTAFUNCTIONAL AROM POLYPEPTIDE"/>
    <property type="match status" value="1"/>
</dbReference>
<dbReference type="Pfam" id="PF00275">
    <property type="entry name" value="EPSP_synthase"/>
    <property type="match status" value="1"/>
</dbReference>
<dbReference type="PIRSF" id="PIRSF000505">
    <property type="entry name" value="EPSPS"/>
    <property type="match status" value="1"/>
</dbReference>
<dbReference type="SUPFAM" id="SSF55205">
    <property type="entry name" value="EPT/RTPC-like"/>
    <property type="match status" value="1"/>
</dbReference>
<dbReference type="PROSITE" id="PS00104">
    <property type="entry name" value="EPSP_SYNTHASE_1"/>
    <property type="match status" value="1"/>
</dbReference>
<dbReference type="PROSITE" id="PS00885">
    <property type="entry name" value="EPSP_SYNTHASE_2"/>
    <property type="match status" value="1"/>
</dbReference>
<accession>Q0AX99</accession>
<proteinExistence type="inferred from homology"/>